<evidence type="ECO:0000255" key="1">
    <source>
        <dbReference type="HAMAP-Rule" id="MF_01026"/>
    </source>
</evidence>
<evidence type="ECO:0000256" key="2">
    <source>
        <dbReference type="SAM" id="MobiDB-lite"/>
    </source>
</evidence>
<sequence>MAKTLAEKVWDAHVVRKGDGEGANAQPDLLYIDLHLVHEVTSPQAFEGLRLAGRPLRRPDLTIATEDHNTPTLDIDKPIADLTSRTQIQTLRNNCKEFGVRLHSLGDAEQGIVHVVGPQLGLTQPGMTVVCGDSHTSTHGAFGALAMGIGTSEVEHVMATQTLSLKPFKTMAINVEGTLRPGVSAKDIILAVIAKIGTGGGQGYVLEYRGSAIRALSMEARMTICNMSIEAGARAGLVAPDQTTYDYMYGRPHAPQGAEWDAAVEYWNTLRTDDDATFDVEVDLDADTLEPFVTWGTNPGQGVSLSSRVPSPEDFGDENAKAAAERALQYMGLEAGTPMKEIRVDTVFLGSCTNSRMEDLRAAADIIRGRTKDPNIRMLVVPGSARVRLEAEAEGLDKVFKDFGAEWRFAGCSMCLGMNPDQLEVGERCASTSNRNFEGRQGKGGRTHLVSPVVAAATAVRGTLSSPSDLDPAPESAAVSSSAA</sequence>
<feature type="chain" id="PRO_1000063525" description="3-isopropylmalate dehydratase large subunit">
    <location>
        <begin position="1"/>
        <end position="484"/>
    </location>
</feature>
<feature type="region of interest" description="Disordered" evidence="2">
    <location>
        <begin position="462"/>
        <end position="484"/>
    </location>
</feature>
<feature type="binding site" evidence="1">
    <location>
        <position position="352"/>
    </location>
    <ligand>
        <name>[4Fe-4S] cluster</name>
        <dbReference type="ChEBI" id="CHEBI:49883"/>
    </ligand>
</feature>
<feature type="binding site" evidence="1">
    <location>
        <position position="412"/>
    </location>
    <ligand>
        <name>[4Fe-4S] cluster</name>
        <dbReference type="ChEBI" id="CHEBI:49883"/>
    </ligand>
</feature>
<feature type="binding site" evidence="1">
    <location>
        <position position="415"/>
    </location>
    <ligand>
        <name>[4Fe-4S] cluster</name>
        <dbReference type="ChEBI" id="CHEBI:49883"/>
    </ligand>
</feature>
<name>LEUC_ARTS2</name>
<gene>
    <name evidence="1" type="primary">leuC</name>
    <name type="ordered locus">Arth_2519</name>
</gene>
<proteinExistence type="inferred from homology"/>
<reference key="1">
    <citation type="journal article" date="2013" name="Stand. Genomic Sci.">
        <title>Complete genome sequence of Arthrobacter sp. strain FB24.</title>
        <authorList>
            <person name="Nakatsu C.H."/>
            <person name="Barabote R."/>
            <person name="Thompson S."/>
            <person name="Bruce D."/>
            <person name="Detter C."/>
            <person name="Brettin T."/>
            <person name="Han C."/>
            <person name="Beasley F."/>
            <person name="Chen W."/>
            <person name="Konopka A."/>
            <person name="Xie G."/>
        </authorList>
    </citation>
    <scope>NUCLEOTIDE SEQUENCE [LARGE SCALE GENOMIC DNA]</scope>
    <source>
        <strain>FB24</strain>
    </source>
</reference>
<accession>A0JXX8</accession>
<comment type="function">
    <text evidence="1">Catalyzes the isomerization between 2-isopropylmalate and 3-isopropylmalate, via the formation of 2-isopropylmaleate.</text>
</comment>
<comment type="catalytic activity">
    <reaction evidence="1">
        <text>(2R,3S)-3-isopropylmalate = (2S)-2-isopropylmalate</text>
        <dbReference type="Rhea" id="RHEA:32287"/>
        <dbReference type="ChEBI" id="CHEBI:1178"/>
        <dbReference type="ChEBI" id="CHEBI:35121"/>
        <dbReference type="EC" id="4.2.1.33"/>
    </reaction>
</comment>
<comment type="cofactor">
    <cofactor evidence="1">
        <name>[4Fe-4S] cluster</name>
        <dbReference type="ChEBI" id="CHEBI:49883"/>
    </cofactor>
    <text evidence="1">Binds 1 [4Fe-4S] cluster per subunit.</text>
</comment>
<comment type="pathway">
    <text evidence="1">Amino-acid biosynthesis; L-leucine biosynthesis; L-leucine from 3-methyl-2-oxobutanoate: step 2/4.</text>
</comment>
<comment type="subunit">
    <text evidence="1">Heterodimer of LeuC and LeuD.</text>
</comment>
<comment type="similarity">
    <text evidence="1">Belongs to the aconitase/IPM isomerase family. LeuC type 1 subfamily.</text>
</comment>
<keyword id="KW-0004">4Fe-4S</keyword>
<keyword id="KW-0028">Amino-acid biosynthesis</keyword>
<keyword id="KW-0100">Branched-chain amino acid biosynthesis</keyword>
<keyword id="KW-0408">Iron</keyword>
<keyword id="KW-0411">Iron-sulfur</keyword>
<keyword id="KW-0432">Leucine biosynthesis</keyword>
<keyword id="KW-0456">Lyase</keyword>
<keyword id="KW-0479">Metal-binding</keyword>
<keyword id="KW-1185">Reference proteome</keyword>
<organism>
    <name type="scientific">Arthrobacter sp. (strain FB24)</name>
    <dbReference type="NCBI Taxonomy" id="290399"/>
    <lineage>
        <taxon>Bacteria</taxon>
        <taxon>Bacillati</taxon>
        <taxon>Actinomycetota</taxon>
        <taxon>Actinomycetes</taxon>
        <taxon>Micrococcales</taxon>
        <taxon>Micrococcaceae</taxon>
        <taxon>Arthrobacter</taxon>
    </lineage>
</organism>
<protein>
    <recommendedName>
        <fullName evidence="1">3-isopropylmalate dehydratase large subunit</fullName>
        <ecNumber evidence="1">4.2.1.33</ecNumber>
    </recommendedName>
    <alternativeName>
        <fullName evidence="1">Alpha-IPM isomerase</fullName>
        <shortName evidence="1">IPMI</shortName>
    </alternativeName>
    <alternativeName>
        <fullName evidence="1">Isopropylmalate isomerase</fullName>
    </alternativeName>
</protein>
<dbReference type="EC" id="4.2.1.33" evidence="1"/>
<dbReference type="EMBL" id="CP000454">
    <property type="protein sequence ID" value="ABK03898.1"/>
    <property type="molecule type" value="Genomic_DNA"/>
</dbReference>
<dbReference type="RefSeq" id="WP_011692360.1">
    <property type="nucleotide sequence ID" value="NC_008541.1"/>
</dbReference>
<dbReference type="SMR" id="A0JXX8"/>
<dbReference type="STRING" id="290399.Arth_2519"/>
<dbReference type="KEGG" id="art:Arth_2519"/>
<dbReference type="eggNOG" id="COG0065">
    <property type="taxonomic scope" value="Bacteria"/>
</dbReference>
<dbReference type="HOGENOM" id="CLU_006714_3_4_11"/>
<dbReference type="OrthoDB" id="9802769at2"/>
<dbReference type="UniPathway" id="UPA00048">
    <property type="reaction ID" value="UER00071"/>
</dbReference>
<dbReference type="Proteomes" id="UP000000754">
    <property type="component" value="Chromosome"/>
</dbReference>
<dbReference type="GO" id="GO:0003861">
    <property type="term" value="F:3-isopropylmalate dehydratase activity"/>
    <property type="evidence" value="ECO:0007669"/>
    <property type="project" value="UniProtKB-UniRule"/>
</dbReference>
<dbReference type="GO" id="GO:0051539">
    <property type="term" value="F:4 iron, 4 sulfur cluster binding"/>
    <property type="evidence" value="ECO:0007669"/>
    <property type="project" value="UniProtKB-KW"/>
</dbReference>
<dbReference type="GO" id="GO:0046872">
    <property type="term" value="F:metal ion binding"/>
    <property type="evidence" value="ECO:0007669"/>
    <property type="project" value="UniProtKB-KW"/>
</dbReference>
<dbReference type="GO" id="GO:0009098">
    <property type="term" value="P:L-leucine biosynthetic process"/>
    <property type="evidence" value="ECO:0007669"/>
    <property type="project" value="UniProtKB-UniRule"/>
</dbReference>
<dbReference type="CDD" id="cd01583">
    <property type="entry name" value="IPMI"/>
    <property type="match status" value="1"/>
</dbReference>
<dbReference type="FunFam" id="3.30.499.10:FF:000007">
    <property type="entry name" value="3-isopropylmalate dehydratase large subunit"/>
    <property type="match status" value="1"/>
</dbReference>
<dbReference type="Gene3D" id="3.30.499.10">
    <property type="entry name" value="Aconitase, domain 3"/>
    <property type="match status" value="2"/>
</dbReference>
<dbReference type="HAMAP" id="MF_01026">
    <property type="entry name" value="LeuC_type1"/>
    <property type="match status" value="1"/>
</dbReference>
<dbReference type="InterPro" id="IPR004430">
    <property type="entry name" value="3-IsopropMal_deHydase_lsu"/>
</dbReference>
<dbReference type="InterPro" id="IPR015931">
    <property type="entry name" value="Acnase/IPM_dHydase_lsu_aba_1/3"/>
</dbReference>
<dbReference type="InterPro" id="IPR001030">
    <property type="entry name" value="Acoase/IPM_deHydtase_lsu_aba"/>
</dbReference>
<dbReference type="InterPro" id="IPR018136">
    <property type="entry name" value="Aconitase_4Fe-4S_BS"/>
</dbReference>
<dbReference type="InterPro" id="IPR036008">
    <property type="entry name" value="Aconitase_4Fe-4S_dom"/>
</dbReference>
<dbReference type="InterPro" id="IPR050067">
    <property type="entry name" value="IPM_dehydratase_rel_enz"/>
</dbReference>
<dbReference type="InterPro" id="IPR033941">
    <property type="entry name" value="IPMI_cat"/>
</dbReference>
<dbReference type="NCBIfam" id="TIGR00170">
    <property type="entry name" value="leuC"/>
    <property type="match status" value="1"/>
</dbReference>
<dbReference type="NCBIfam" id="NF004016">
    <property type="entry name" value="PRK05478.1"/>
    <property type="match status" value="1"/>
</dbReference>
<dbReference type="NCBIfam" id="NF009116">
    <property type="entry name" value="PRK12466.1"/>
    <property type="match status" value="1"/>
</dbReference>
<dbReference type="PANTHER" id="PTHR43822:SF9">
    <property type="entry name" value="3-ISOPROPYLMALATE DEHYDRATASE"/>
    <property type="match status" value="1"/>
</dbReference>
<dbReference type="PANTHER" id="PTHR43822">
    <property type="entry name" value="HOMOACONITASE, MITOCHONDRIAL-RELATED"/>
    <property type="match status" value="1"/>
</dbReference>
<dbReference type="Pfam" id="PF00330">
    <property type="entry name" value="Aconitase"/>
    <property type="match status" value="1"/>
</dbReference>
<dbReference type="PRINTS" id="PR00415">
    <property type="entry name" value="ACONITASE"/>
</dbReference>
<dbReference type="SUPFAM" id="SSF53732">
    <property type="entry name" value="Aconitase iron-sulfur domain"/>
    <property type="match status" value="1"/>
</dbReference>
<dbReference type="PROSITE" id="PS00450">
    <property type="entry name" value="ACONITASE_1"/>
    <property type="match status" value="1"/>
</dbReference>
<dbReference type="PROSITE" id="PS01244">
    <property type="entry name" value="ACONITASE_2"/>
    <property type="match status" value="1"/>
</dbReference>